<comment type="function">
    <text evidence="1">The UvrABC repair system catalyzes the recognition and processing of DNA lesions. UvrC both incises the 5' and 3' sides of the lesion. The N-terminal half is responsible for the 3' incision and the C-terminal half is responsible for the 5' incision.</text>
</comment>
<comment type="subunit">
    <text evidence="1">Interacts with UvrB in an incision complex.</text>
</comment>
<comment type="subcellular location">
    <subcellularLocation>
        <location evidence="1">Cytoplasm</location>
    </subcellularLocation>
</comment>
<comment type="similarity">
    <text evidence="1">Belongs to the UvrC family.</text>
</comment>
<name>UVRC_STRT2</name>
<gene>
    <name evidence="1" type="primary">uvrC</name>
    <name type="ordered locus">stu1306</name>
</gene>
<protein>
    <recommendedName>
        <fullName evidence="1">UvrABC system protein C</fullName>
        <shortName evidence="1">Protein UvrC</shortName>
    </recommendedName>
    <alternativeName>
        <fullName evidence="1">Excinuclease ABC subunit C</fullName>
    </alternativeName>
</protein>
<feature type="chain" id="PRO_0000227480" description="UvrABC system protein C">
    <location>
        <begin position="1"/>
        <end position="595"/>
    </location>
</feature>
<feature type="domain" description="GIY-YIG" evidence="1">
    <location>
        <begin position="14"/>
        <end position="91"/>
    </location>
</feature>
<feature type="domain" description="UVR" evidence="1">
    <location>
        <begin position="196"/>
        <end position="231"/>
    </location>
</feature>
<reference key="1">
    <citation type="journal article" date="2004" name="Nat. Biotechnol.">
        <title>Complete sequence and comparative genome analysis of the dairy bacterium Streptococcus thermophilus.</title>
        <authorList>
            <person name="Bolotin A."/>
            <person name="Quinquis B."/>
            <person name="Renault P."/>
            <person name="Sorokin A."/>
            <person name="Ehrlich S.D."/>
            <person name="Kulakauskas S."/>
            <person name="Lapidus A."/>
            <person name="Goltsman E."/>
            <person name="Mazur M."/>
            <person name="Pusch G.D."/>
            <person name="Fonstein M."/>
            <person name="Overbeek R."/>
            <person name="Kyprides N."/>
            <person name="Purnelle B."/>
            <person name="Prozzi D."/>
            <person name="Ngui K."/>
            <person name="Masuy D."/>
            <person name="Hancy F."/>
            <person name="Burteau S."/>
            <person name="Boutry M."/>
            <person name="Delcour J."/>
            <person name="Goffeau A."/>
            <person name="Hols P."/>
        </authorList>
    </citation>
    <scope>NUCLEOTIDE SEQUENCE [LARGE SCALE GENOMIC DNA]</scope>
    <source>
        <strain>ATCC BAA-250 / LMG 18311</strain>
    </source>
</reference>
<proteinExistence type="inferred from homology"/>
<accession>Q5M3R7</accession>
<organism>
    <name type="scientific">Streptococcus thermophilus (strain ATCC BAA-250 / LMG 18311)</name>
    <dbReference type="NCBI Taxonomy" id="264199"/>
    <lineage>
        <taxon>Bacteria</taxon>
        <taxon>Bacillati</taxon>
        <taxon>Bacillota</taxon>
        <taxon>Bacilli</taxon>
        <taxon>Lactobacillales</taxon>
        <taxon>Streptococcaceae</taxon>
        <taxon>Streptococcus</taxon>
    </lineage>
</organism>
<evidence type="ECO:0000255" key="1">
    <source>
        <dbReference type="HAMAP-Rule" id="MF_00203"/>
    </source>
</evidence>
<dbReference type="EMBL" id="CP000023">
    <property type="protein sequence ID" value="AAV60936.1"/>
    <property type="molecule type" value="Genomic_DNA"/>
</dbReference>
<dbReference type="RefSeq" id="WP_011226197.1">
    <property type="nucleotide sequence ID" value="NC_006448.1"/>
</dbReference>
<dbReference type="SMR" id="Q5M3R7"/>
<dbReference type="STRING" id="264199.stu1306"/>
<dbReference type="KEGG" id="stl:stu1306"/>
<dbReference type="PATRIC" id="fig|264199.4.peg.1290"/>
<dbReference type="eggNOG" id="COG0322">
    <property type="taxonomic scope" value="Bacteria"/>
</dbReference>
<dbReference type="HOGENOM" id="CLU_014841_3_2_9"/>
<dbReference type="Proteomes" id="UP000001170">
    <property type="component" value="Chromosome"/>
</dbReference>
<dbReference type="GO" id="GO:0005737">
    <property type="term" value="C:cytoplasm"/>
    <property type="evidence" value="ECO:0007669"/>
    <property type="project" value="UniProtKB-SubCell"/>
</dbReference>
<dbReference type="GO" id="GO:0009380">
    <property type="term" value="C:excinuclease repair complex"/>
    <property type="evidence" value="ECO:0007669"/>
    <property type="project" value="InterPro"/>
</dbReference>
<dbReference type="GO" id="GO:0003677">
    <property type="term" value="F:DNA binding"/>
    <property type="evidence" value="ECO:0007669"/>
    <property type="project" value="UniProtKB-UniRule"/>
</dbReference>
<dbReference type="GO" id="GO:0009381">
    <property type="term" value="F:excinuclease ABC activity"/>
    <property type="evidence" value="ECO:0007669"/>
    <property type="project" value="UniProtKB-UniRule"/>
</dbReference>
<dbReference type="GO" id="GO:0006289">
    <property type="term" value="P:nucleotide-excision repair"/>
    <property type="evidence" value="ECO:0007669"/>
    <property type="project" value="UniProtKB-UniRule"/>
</dbReference>
<dbReference type="GO" id="GO:0009432">
    <property type="term" value="P:SOS response"/>
    <property type="evidence" value="ECO:0007669"/>
    <property type="project" value="UniProtKB-UniRule"/>
</dbReference>
<dbReference type="CDD" id="cd10434">
    <property type="entry name" value="GIY-YIG_UvrC_Cho"/>
    <property type="match status" value="1"/>
</dbReference>
<dbReference type="FunFam" id="3.30.420.340:FF:000002">
    <property type="entry name" value="UvrABC system protein C"/>
    <property type="match status" value="1"/>
</dbReference>
<dbReference type="FunFam" id="3.40.1440.10:FF:000001">
    <property type="entry name" value="UvrABC system protein C"/>
    <property type="match status" value="1"/>
</dbReference>
<dbReference type="Gene3D" id="1.10.150.20">
    <property type="entry name" value="5' to 3' exonuclease, C-terminal subdomain"/>
    <property type="match status" value="1"/>
</dbReference>
<dbReference type="Gene3D" id="3.40.1440.10">
    <property type="entry name" value="GIY-YIG endonuclease"/>
    <property type="match status" value="1"/>
</dbReference>
<dbReference type="Gene3D" id="4.10.860.10">
    <property type="entry name" value="UVR domain"/>
    <property type="match status" value="1"/>
</dbReference>
<dbReference type="Gene3D" id="3.30.420.340">
    <property type="entry name" value="UvrC, RNAse H endonuclease domain"/>
    <property type="match status" value="1"/>
</dbReference>
<dbReference type="HAMAP" id="MF_00203">
    <property type="entry name" value="UvrC"/>
    <property type="match status" value="1"/>
</dbReference>
<dbReference type="InterPro" id="IPR000305">
    <property type="entry name" value="GIY-YIG_endonuc"/>
</dbReference>
<dbReference type="InterPro" id="IPR035901">
    <property type="entry name" value="GIY-YIG_endonuc_sf"/>
</dbReference>
<dbReference type="InterPro" id="IPR047296">
    <property type="entry name" value="GIY-YIG_UvrC_Cho"/>
</dbReference>
<dbReference type="InterPro" id="IPR010994">
    <property type="entry name" value="RuvA_2-like"/>
</dbReference>
<dbReference type="InterPro" id="IPR001943">
    <property type="entry name" value="UVR_dom"/>
</dbReference>
<dbReference type="InterPro" id="IPR036876">
    <property type="entry name" value="UVR_dom_sf"/>
</dbReference>
<dbReference type="InterPro" id="IPR050066">
    <property type="entry name" value="UvrABC_protein_C"/>
</dbReference>
<dbReference type="InterPro" id="IPR004791">
    <property type="entry name" value="UvrC"/>
</dbReference>
<dbReference type="InterPro" id="IPR001162">
    <property type="entry name" value="UvrC_RNase_H_dom"/>
</dbReference>
<dbReference type="InterPro" id="IPR038476">
    <property type="entry name" value="UvrC_RNase_H_dom_sf"/>
</dbReference>
<dbReference type="NCBIfam" id="TIGR00194">
    <property type="entry name" value="uvrC"/>
    <property type="match status" value="1"/>
</dbReference>
<dbReference type="PANTHER" id="PTHR30562:SF1">
    <property type="entry name" value="UVRABC SYSTEM PROTEIN C"/>
    <property type="match status" value="1"/>
</dbReference>
<dbReference type="PANTHER" id="PTHR30562">
    <property type="entry name" value="UVRC/OXIDOREDUCTASE"/>
    <property type="match status" value="1"/>
</dbReference>
<dbReference type="Pfam" id="PF01541">
    <property type="entry name" value="GIY-YIG"/>
    <property type="match status" value="1"/>
</dbReference>
<dbReference type="Pfam" id="PF14520">
    <property type="entry name" value="HHH_5"/>
    <property type="match status" value="1"/>
</dbReference>
<dbReference type="Pfam" id="PF02151">
    <property type="entry name" value="UVR"/>
    <property type="match status" value="1"/>
</dbReference>
<dbReference type="Pfam" id="PF22920">
    <property type="entry name" value="UvrC_RNaseH"/>
    <property type="match status" value="1"/>
</dbReference>
<dbReference type="Pfam" id="PF08459">
    <property type="entry name" value="UvrC_RNaseH_dom"/>
    <property type="match status" value="1"/>
</dbReference>
<dbReference type="SMART" id="SM00465">
    <property type="entry name" value="GIYc"/>
    <property type="match status" value="1"/>
</dbReference>
<dbReference type="SUPFAM" id="SSF46600">
    <property type="entry name" value="C-terminal UvrC-binding domain of UvrB"/>
    <property type="match status" value="1"/>
</dbReference>
<dbReference type="SUPFAM" id="SSF82771">
    <property type="entry name" value="GIY-YIG endonuclease"/>
    <property type="match status" value="1"/>
</dbReference>
<dbReference type="SUPFAM" id="SSF47781">
    <property type="entry name" value="RuvA domain 2-like"/>
    <property type="match status" value="1"/>
</dbReference>
<dbReference type="PROSITE" id="PS50164">
    <property type="entry name" value="GIY_YIG"/>
    <property type="match status" value="1"/>
</dbReference>
<dbReference type="PROSITE" id="PS50151">
    <property type="entry name" value="UVR"/>
    <property type="match status" value="1"/>
</dbReference>
<dbReference type="PROSITE" id="PS50165">
    <property type="entry name" value="UVRC"/>
    <property type="match status" value="1"/>
</dbReference>
<sequence length="595" mass="68580">MNDLIKHKLELLPNNPGCYLHKDKFGNIIYVGKAKNLKNRVRSYFRGSHDTKTELLVSEIADFEFIVTESNIEALLLEINLIQENMPKFNIRLKDGKSYPFIKITKELYPRLLITRQVKKDGGLYFGPYPDAGAANEIKKLLDRIFPFKKCKNPANKVCFYYHIGQCKAHTICHTTEAYWQGLVEDVKNFLNGHDDKIVNQLKAKMKDMSDQMEFERAAEYRDLIEAVSTLRTKQRVIRQDMQDRDIFGYYVDKGWMCVQVFFVRQGKLIQRDVNMFPYYNDAEEDFLTYIGQFYLDSRHLKPKEIFIPGDIDQESVEALVGNEVKVFKPQRGEKKQLVNLAMKNARVSLTQKFDLLEKDIAKTQGAIENLGKLMGIPTPVRIESFDNSNIMGTSPVSAMVVFENGKPNKKEYRKYKIKTVEGPDDYASMREVIRRRYSRVKRDGLTPPDLIIMDGGQGQVNVAKDVLRNELNLSIPVAGLQKNDKHQTNELLFGDPLRVIDLPRQSEEFFLLHRIQDEVHRFAITFHRQVRSKNSFSSKLDGVEGLGPKRKQKLLKNFKSMTAIQQASVEDIQALGIPEKVAQALLDKLSQDSH</sequence>
<keyword id="KW-0963">Cytoplasm</keyword>
<keyword id="KW-0227">DNA damage</keyword>
<keyword id="KW-0228">DNA excision</keyword>
<keyword id="KW-0234">DNA repair</keyword>
<keyword id="KW-0267">Excision nuclease</keyword>
<keyword id="KW-1185">Reference proteome</keyword>
<keyword id="KW-0742">SOS response</keyword>